<dbReference type="EMBL" id="CU329671">
    <property type="protein sequence ID" value="CAB10812.1"/>
    <property type="molecule type" value="Genomic_DNA"/>
</dbReference>
<dbReference type="PIR" id="T40179">
    <property type="entry name" value="T40179"/>
</dbReference>
<dbReference type="RefSeq" id="NP_596268.1">
    <property type="nucleotide sequence ID" value="NM_001022189.2"/>
</dbReference>
<dbReference type="SMR" id="O14362"/>
<dbReference type="BioGRID" id="276868">
    <property type="interactions" value="13"/>
</dbReference>
<dbReference type="FunCoup" id="O14362">
    <property type="interactions" value="39"/>
</dbReference>
<dbReference type="STRING" id="284812.O14362"/>
<dbReference type="iPTMnet" id="O14362"/>
<dbReference type="PaxDb" id="4896-SPBC30D10.17c.1"/>
<dbReference type="EnsemblFungi" id="SPBC30D10.17c.1">
    <property type="protein sequence ID" value="SPBC30D10.17c.1:pep"/>
    <property type="gene ID" value="SPBC30D10.17c"/>
</dbReference>
<dbReference type="GeneID" id="2540339"/>
<dbReference type="KEGG" id="spo:2540339"/>
<dbReference type="PomBase" id="SPBC30D10.17c">
    <property type="gene designation" value="smi1"/>
</dbReference>
<dbReference type="VEuPathDB" id="FungiDB:SPBC30D10.17c"/>
<dbReference type="eggNOG" id="ENOG502QTAZ">
    <property type="taxonomic scope" value="Eukaryota"/>
</dbReference>
<dbReference type="HOGENOM" id="CLU_024700_0_0_1"/>
<dbReference type="InParanoid" id="O14362"/>
<dbReference type="OMA" id="WAEENYY"/>
<dbReference type="PhylomeDB" id="O14362"/>
<dbReference type="PRO" id="PR:O14362"/>
<dbReference type="Proteomes" id="UP000002485">
    <property type="component" value="Chromosome II"/>
</dbReference>
<dbReference type="GO" id="GO:0032153">
    <property type="term" value="C:cell division site"/>
    <property type="evidence" value="ECO:0000314"/>
    <property type="project" value="PomBase"/>
</dbReference>
<dbReference type="GO" id="GO:0097708">
    <property type="term" value="C:intracellular vesicle"/>
    <property type="evidence" value="ECO:0000314"/>
    <property type="project" value="PomBase"/>
</dbReference>
<dbReference type="GO" id="GO:0005634">
    <property type="term" value="C:nucleus"/>
    <property type="evidence" value="ECO:0007669"/>
    <property type="project" value="UniProtKB-SubCell"/>
</dbReference>
<dbReference type="GO" id="GO:0003677">
    <property type="term" value="F:DNA binding"/>
    <property type="evidence" value="ECO:0007669"/>
    <property type="project" value="UniProtKB-KW"/>
</dbReference>
<dbReference type="GO" id="GO:0030674">
    <property type="term" value="F:protein-macromolecule adaptor activity"/>
    <property type="evidence" value="ECO:0000315"/>
    <property type="project" value="PomBase"/>
</dbReference>
<dbReference type="GO" id="GO:0071555">
    <property type="term" value="P:cell wall organization"/>
    <property type="evidence" value="ECO:0007669"/>
    <property type="project" value="UniProtKB-KW"/>
</dbReference>
<dbReference type="GO" id="GO:0070880">
    <property type="term" value="P:fungal-type cell wall beta-glucan biosynthetic process"/>
    <property type="evidence" value="ECO:0000318"/>
    <property type="project" value="GO_Central"/>
</dbReference>
<dbReference type="GO" id="GO:0140278">
    <property type="term" value="P:mitotic division septum assembly"/>
    <property type="evidence" value="ECO:0000269"/>
    <property type="project" value="PomBase"/>
</dbReference>
<dbReference type="Gene3D" id="3.40.1580.10">
    <property type="entry name" value="SMI1/KNR4-like"/>
    <property type="match status" value="1"/>
</dbReference>
<dbReference type="InterPro" id="IPR009203">
    <property type="entry name" value="Knr4/Smi1"/>
</dbReference>
<dbReference type="InterPro" id="IPR018958">
    <property type="entry name" value="Knr4/Smi1-like_dom"/>
</dbReference>
<dbReference type="InterPro" id="IPR037883">
    <property type="entry name" value="Knr4/Smi1-like_sf"/>
</dbReference>
<dbReference type="InterPro" id="IPR051873">
    <property type="entry name" value="KNR4/SMI1_regulator"/>
</dbReference>
<dbReference type="PANTHER" id="PTHR47432">
    <property type="entry name" value="CELL WALL ASSEMBLY REGULATOR SMI1"/>
    <property type="match status" value="1"/>
</dbReference>
<dbReference type="PANTHER" id="PTHR47432:SF1">
    <property type="entry name" value="CELL WALL ASSEMBLY REGULATOR SMI1"/>
    <property type="match status" value="1"/>
</dbReference>
<dbReference type="Pfam" id="PF09346">
    <property type="entry name" value="SMI1_KNR4"/>
    <property type="match status" value="1"/>
</dbReference>
<dbReference type="PIRSF" id="PIRSF017023">
    <property type="entry name" value="KNR4"/>
    <property type="match status" value="1"/>
</dbReference>
<dbReference type="SMART" id="SM00860">
    <property type="entry name" value="SMI1_KNR4"/>
    <property type="match status" value="1"/>
</dbReference>
<dbReference type="SUPFAM" id="SSF160631">
    <property type="entry name" value="SMI1/KNR4-like"/>
    <property type="match status" value="1"/>
</dbReference>
<feature type="chain" id="PRO_0000209877" description="Cell wall biosynthesis/cell cycle regulator smi1">
    <location>
        <begin position="1"/>
        <end position="504"/>
    </location>
</feature>
<feature type="region of interest" description="Disordered" evidence="2">
    <location>
        <begin position="17"/>
        <end position="45"/>
    </location>
</feature>
<feature type="region of interest" description="Disordered" evidence="2">
    <location>
        <begin position="68"/>
        <end position="98"/>
    </location>
</feature>
<feature type="region of interest" description="Disordered" evidence="2">
    <location>
        <begin position="349"/>
        <end position="403"/>
    </location>
</feature>
<feature type="region of interest" description="Disordered" evidence="2">
    <location>
        <begin position="422"/>
        <end position="504"/>
    </location>
</feature>
<feature type="compositionally biased region" description="Basic and acidic residues" evidence="2">
    <location>
        <begin position="25"/>
        <end position="40"/>
    </location>
</feature>
<feature type="compositionally biased region" description="Polar residues" evidence="2">
    <location>
        <begin position="68"/>
        <end position="91"/>
    </location>
</feature>
<feature type="compositionally biased region" description="Basic residues" evidence="2">
    <location>
        <begin position="349"/>
        <end position="360"/>
    </location>
</feature>
<feature type="compositionally biased region" description="Polar residues" evidence="2">
    <location>
        <begin position="373"/>
        <end position="386"/>
    </location>
</feature>
<feature type="compositionally biased region" description="Polar residues" evidence="2">
    <location>
        <begin position="425"/>
        <end position="434"/>
    </location>
</feature>
<feature type="compositionally biased region" description="Low complexity" evidence="2">
    <location>
        <begin position="448"/>
        <end position="460"/>
    </location>
</feature>
<feature type="compositionally biased region" description="Basic and acidic residues" evidence="2">
    <location>
        <begin position="461"/>
        <end position="473"/>
    </location>
</feature>
<feature type="modified residue" description="Phosphoserine" evidence="4">
    <location>
        <position position="500"/>
    </location>
</feature>
<keyword id="KW-0131">Cell cycle</keyword>
<keyword id="KW-0132">Cell division</keyword>
<keyword id="KW-0961">Cell wall biogenesis/degradation</keyword>
<keyword id="KW-0238">DNA-binding</keyword>
<keyword id="KW-0498">Mitosis</keyword>
<keyword id="KW-0539">Nucleus</keyword>
<keyword id="KW-0597">Phosphoprotein</keyword>
<keyword id="KW-1185">Reference proteome</keyword>
<keyword id="KW-0804">Transcription</keyword>
<keyword id="KW-0805">Transcription regulation</keyword>
<protein>
    <recommendedName>
        <fullName>Cell wall biosynthesis/cell cycle regulator smi1</fullName>
    </recommendedName>
</protein>
<sequence>MSKNSFSSMANSVTSFFQSLTTPNRHADPSFRPSRREKQSRLPTPLQSVAASAYSGVNASQTGLLNDSRANSVTNLPNSSNTSQVGLNNISPAPVGYVPGSKTNELANNSMEMQEISPNGSASLPPPVSESWRRIDRWAEENYYELYCQLCYGATVADVDSLEYELECTLPRDVRESLYIHDGQDRGGQPTGILFGVTLLDIEEIEEESELWRRVAQSYAEATLAGKIDQAVASRQASFPPGAVQCVYAHPGWIPLAKDFVGNNIAIDLAPGPAGQWGQVILFGRDQDTKYVVARSWADFLAIVAYDMENGKWLVDEDDNSLRLIYGPPREQWSYLDILKYRARKAERRKFKKRDGKRTTRPIPKSIAKEDVTNSANSTAPSTGTTVLDDGLDNNYEDIPLYGPSKDEELIKKEELEADTDLGLINTSEINQPANLPDEPTAETSNPVSATTVEAVTTTADNKDEEKNDHVTEDVSQNSTIAEASSLQAQEEEKEIETTSVKQE</sequence>
<reference key="1">
    <citation type="journal article" date="2002" name="Nature">
        <title>The genome sequence of Schizosaccharomyces pombe.</title>
        <authorList>
            <person name="Wood V."/>
            <person name="Gwilliam R."/>
            <person name="Rajandream M.A."/>
            <person name="Lyne M.H."/>
            <person name="Lyne R."/>
            <person name="Stewart A."/>
            <person name="Sgouros J.G."/>
            <person name="Peat N."/>
            <person name="Hayles J."/>
            <person name="Baker S.G."/>
            <person name="Basham D."/>
            <person name="Bowman S."/>
            <person name="Brooks K."/>
            <person name="Brown D."/>
            <person name="Brown S."/>
            <person name="Chillingworth T."/>
            <person name="Churcher C.M."/>
            <person name="Collins M."/>
            <person name="Connor R."/>
            <person name="Cronin A."/>
            <person name="Davis P."/>
            <person name="Feltwell T."/>
            <person name="Fraser A."/>
            <person name="Gentles S."/>
            <person name="Goble A."/>
            <person name="Hamlin N."/>
            <person name="Harris D.E."/>
            <person name="Hidalgo J."/>
            <person name="Hodgson G."/>
            <person name="Holroyd S."/>
            <person name="Hornsby T."/>
            <person name="Howarth S."/>
            <person name="Huckle E.J."/>
            <person name="Hunt S."/>
            <person name="Jagels K."/>
            <person name="James K.D."/>
            <person name="Jones L."/>
            <person name="Jones M."/>
            <person name="Leather S."/>
            <person name="McDonald S."/>
            <person name="McLean J."/>
            <person name="Mooney P."/>
            <person name="Moule S."/>
            <person name="Mungall K.L."/>
            <person name="Murphy L.D."/>
            <person name="Niblett D."/>
            <person name="Odell C."/>
            <person name="Oliver K."/>
            <person name="O'Neil S."/>
            <person name="Pearson D."/>
            <person name="Quail M.A."/>
            <person name="Rabbinowitsch E."/>
            <person name="Rutherford K.M."/>
            <person name="Rutter S."/>
            <person name="Saunders D."/>
            <person name="Seeger K."/>
            <person name="Sharp S."/>
            <person name="Skelton J."/>
            <person name="Simmonds M.N."/>
            <person name="Squares R."/>
            <person name="Squares S."/>
            <person name="Stevens K."/>
            <person name="Taylor K."/>
            <person name="Taylor R.G."/>
            <person name="Tivey A."/>
            <person name="Walsh S.V."/>
            <person name="Warren T."/>
            <person name="Whitehead S."/>
            <person name="Woodward J.R."/>
            <person name="Volckaert G."/>
            <person name="Aert R."/>
            <person name="Robben J."/>
            <person name="Grymonprez B."/>
            <person name="Weltjens I."/>
            <person name="Vanstreels E."/>
            <person name="Rieger M."/>
            <person name="Schaefer M."/>
            <person name="Mueller-Auer S."/>
            <person name="Gabel C."/>
            <person name="Fuchs M."/>
            <person name="Duesterhoeft A."/>
            <person name="Fritzc C."/>
            <person name="Holzer E."/>
            <person name="Moestl D."/>
            <person name="Hilbert H."/>
            <person name="Borzym K."/>
            <person name="Langer I."/>
            <person name="Beck A."/>
            <person name="Lehrach H."/>
            <person name="Reinhardt R."/>
            <person name="Pohl T.M."/>
            <person name="Eger P."/>
            <person name="Zimmermann W."/>
            <person name="Wedler H."/>
            <person name="Wambutt R."/>
            <person name="Purnelle B."/>
            <person name="Goffeau A."/>
            <person name="Cadieu E."/>
            <person name="Dreano S."/>
            <person name="Gloux S."/>
            <person name="Lelaure V."/>
            <person name="Mottier S."/>
            <person name="Galibert F."/>
            <person name="Aves S.J."/>
            <person name="Xiang Z."/>
            <person name="Hunt C."/>
            <person name="Moore K."/>
            <person name="Hurst S.M."/>
            <person name="Lucas M."/>
            <person name="Rochet M."/>
            <person name="Gaillardin C."/>
            <person name="Tallada V.A."/>
            <person name="Garzon A."/>
            <person name="Thode G."/>
            <person name="Daga R.R."/>
            <person name="Cruzado L."/>
            <person name="Jimenez J."/>
            <person name="Sanchez M."/>
            <person name="del Rey F."/>
            <person name="Benito J."/>
            <person name="Dominguez A."/>
            <person name="Revuelta J.L."/>
            <person name="Moreno S."/>
            <person name="Armstrong J."/>
            <person name="Forsburg S.L."/>
            <person name="Cerutti L."/>
            <person name="Lowe T."/>
            <person name="McCombie W.R."/>
            <person name="Paulsen I."/>
            <person name="Potashkin J."/>
            <person name="Shpakovski G.V."/>
            <person name="Ussery D."/>
            <person name="Barrell B.G."/>
            <person name="Nurse P."/>
        </authorList>
    </citation>
    <scope>NUCLEOTIDE SEQUENCE [LARGE SCALE GENOMIC DNA]</scope>
    <source>
        <strain>972 / ATCC 24843</strain>
    </source>
</reference>
<reference key="2">
    <citation type="journal article" date="2006" name="Nat. Biotechnol.">
        <title>ORFeome cloning and global analysis of protein localization in the fission yeast Schizosaccharomyces pombe.</title>
        <authorList>
            <person name="Matsuyama A."/>
            <person name="Arai R."/>
            <person name="Yashiroda Y."/>
            <person name="Shirai A."/>
            <person name="Kamata A."/>
            <person name="Sekido S."/>
            <person name="Kobayashi Y."/>
            <person name="Hashimoto A."/>
            <person name="Hamamoto M."/>
            <person name="Hiraoka Y."/>
            <person name="Horinouchi S."/>
            <person name="Yoshida M."/>
        </authorList>
    </citation>
    <scope>SUBCELLULAR LOCATION [LARGE SCALE ANALYSIS]</scope>
</reference>
<reference key="3">
    <citation type="journal article" date="2008" name="J. Proteome Res.">
        <title>Phosphoproteome analysis of fission yeast.</title>
        <authorList>
            <person name="Wilson-Grady J.T."/>
            <person name="Villen J."/>
            <person name="Gygi S.P."/>
        </authorList>
    </citation>
    <scope>PHOSPHORYLATION [LARGE SCALE ANALYSIS] AT SER-500</scope>
    <scope>IDENTIFICATION BY MASS SPECTROMETRY</scope>
</reference>
<reference key="4">
    <citation type="journal article" date="2009" name="J. Cell Sci.">
        <title>Genetic control of cellular quiescence in S. pombe.</title>
        <authorList>
            <person name="Sajiki K."/>
            <person name="Hatanaka M."/>
            <person name="Nakamura T."/>
            <person name="Takeda K."/>
            <person name="Shimanuki M."/>
            <person name="Yoshida T."/>
            <person name="Hanyu Y."/>
            <person name="Hayashi T."/>
            <person name="Nakaseko Y."/>
            <person name="Yanagida M."/>
        </authorList>
    </citation>
    <scope>FUNCTION</scope>
</reference>
<name>SMI1_SCHPO</name>
<evidence type="ECO:0000250" key="1"/>
<evidence type="ECO:0000256" key="2">
    <source>
        <dbReference type="SAM" id="MobiDB-lite"/>
    </source>
</evidence>
<evidence type="ECO:0000269" key="3">
    <source>
    </source>
</evidence>
<evidence type="ECO:0000269" key="4">
    <source>
    </source>
</evidence>
<evidence type="ECO:0000269" key="5">
    <source>
    </source>
</evidence>
<evidence type="ECO:0000305" key="6"/>
<accession>O14362</accession>
<organism>
    <name type="scientific">Schizosaccharomyces pombe (strain 972 / ATCC 24843)</name>
    <name type="common">Fission yeast</name>
    <dbReference type="NCBI Taxonomy" id="284812"/>
    <lineage>
        <taxon>Eukaryota</taxon>
        <taxon>Fungi</taxon>
        <taxon>Dikarya</taxon>
        <taxon>Ascomycota</taxon>
        <taxon>Taphrinomycotina</taxon>
        <taxon>Schizosaccharomycetes</taxon>
        <taxon>Schizosaccharomycetales</taxon>
        <taxon>Schizosaccharomycetaceae</taxon>
        <taxon>Schizosaccharomyces</taxon>
    </lineage>
</organism>
<proteinExistence type="evidence at protein level"/>
<gene>
    <name type="primary">smi1</name>
    <name type="ORF">SPBC30D10.17c</name>
</gene>
<comment type="function">
    <text evidence="1 5">Protein involved in the regulation of cell wall assembly and 1,3-beta-glucan synthesis, possibly through the transcriptional regulation of cell wall glucan and chitin synthesis (By similarity). Involved in cellular response to nitrogen starvation and required for quiescence-maintenance by regulating negatively G0 to G1 transition.</text>
</comment>
<comment type="subcellular location">
    <subcellularLocation>
        <location evidence="3">Nucleus</location>
    </subcellularLocation>
    <text evidence="3">Localizes to the division site.</text>
</comment>
<comment type="similarity">
    <text evidence="6">Belongs to the KNR4/SMI1 family.</text>
</comment>